<evidence type="ECO:0000255" key="1">
    <source>
        <dbReference type="HAMAP-Rule" id="MF_00127"/>
    </source>
</evidence>
<keyword id="KW-0030">Aminoacyl-tRNA synthetase</keyword>
<keyword id="KW-0067">ATP-binding</keyword>
<keyword id="KW-0963">Cytoplasm</keyword>
<keyword id="KW-0436">Ligase</keyword>
<keyword id="KW-0547">Nucleotide-binding</keyword>
<keyword id="KW-0648">Protein biosynthesis</keyword>
<reference key="1">
    <citation type="journal article" date="2008" name="J. Bacteriol.">
        <title>Comparative genome sequence analysis of multidrug-resistant Acinetobacter baumannii.</title>
        <authorList>
            <person name="Adams M.D."/>
            <person name="Goglin K."/>
            <person name="Molyneaux N."/>
            <person name="Hujer K.M."/>
            <person name="Lavender H."/>
            <person name="Jamison J.J."/>
            <person name="MacDonald I.J."/>
            <person name="Martin K.M."/>
            <person name="Russo T."/>
            <person name="Campagnari A.A."/>
            <person name="Hujer A.M."/>
            <person name="Bonomo R.A."/>
            <person name="Gill S.R."/>
        </authorList>
    </citation>
    <scope>NUCLEOTIDE SEQUENCE [LARGE SCALE GENOMIC DNA]</scope>
    <source>
        <strain>AB307-0294</strain>
    </source>
</reference>
<comment type="catalytic activity">
    <reaction evidence="1">
        <text>tRNA(His) + L-histidine + ATP = L-histidyl-tRNA(His) + AMP + diphosphate + H(+)</text>
        <dbReference type="Rhea" id="RHEA:17313"/>
        <dbReference type="Rhea" id="RHEA-COMP:9665"/>
        <dbReference type="Rhea" id="RHEA-COMP:9689"/>
        <dbReference type="ChEBI" id="CHEBI:15378"/>
        <dbReference type="ChEBI" id="CHEBI:30616"/>
        <dbReference type="ChEBI" id="CHEBI:33019"/>
        <dbReference type="ChEBI" id="CHEBI:57595"/>
        <dbReference type="ChEBI" id="CHEBI:78442"/>
        <dbReference type="ChEBI" id="CHEBI:78527"/>
        <dbReference type="ChEBI" id="CHEBI:456215"/>
        <dbReference type="EC" id="6.1.1.21"/>
    </reaction>
</comment>
<comment type="subunit">
    <text evidence="1">Homodimer.</text>
</comment>
<comment type="subcellular location">
    <subcellularLocation>
        <location evidence="1">Cytoplasm</location>
    </subcellularLocation>
</comment>
<comment type="similarity">
    <text evidence="1">Belongs to the class-II aminoacyl-tRNA synthetase family.</text>
</comment>
<protein>
    <recommendedName>
        <fullName evidence="1">Histidine--tRNA ligase</fullName>
        <ecNumber evidence="1">6.1.1.21</ecNumber>
    </recommendedName>
    <alternativeName>
        <fullName evidence="1">Histidyl-tRNA synthetase</fullName>
        <shortName evidence="1">HisRS</shortName>
    </alternativeName>
</protein>
<gene>
    <name evidence="1" type="primary">hisS</name>
    <name type="ordered locus">ABBFA_003032</name>
</gene>
<sequence length="430" mass="48382">MSSIVAIKGFNDVLPTQTAAWRRLEQHLASLMDAYGYQQIRLPIVEQTGLFKRAIGDATDIVEKEMYTFFDKGNPPESLTLRPEGTAGCVRALVEHNLLRGATPRVWYMGPMFRYEKPQKGRYRQFHQFGVETFGVATPDIDAELIMLTARLWKRMGVDHMVQLELNTLGETDERTEYRNALVAFLNEHKDALDEDSQRRLTTNPLRILDSKIESTQKILENAPKLHDFLKEDSLSHFQQLQDYLTAAGIKFVINQKLVRGLDYYNKTVFEWTTTALGSQGTVCAGGRYDGLVGQLKGKADQSVPAVGFAMGMERLLLLLEQVEQAEIVRDCEAFLVAEPAYQSKALVLAEQLRDQLEAANSNIRIKTGSQGSMKSQMKKADQAGAVYAIILGEREWEAQQLAVKELATAEQSQVALAELVPFLIEKFTK</sequence>
<name>SYH_ACIB3</name>
<dbReference type="EC" id="6.1.1.21" evidence="1"/>
<dbReference type="EMBL" id="CP001172">
    <property type="protein sequence ID" value="ACJ56303.1"/>
    <property type="molecule type" value="Genomic_DNA"/>
</dbReference>
<dbReference type="RefSeq" id="WP_000095254.1">
    <property type="nucleotide sequence ID" value="NZ_CP001172.1"/>
</dbReference>
<dbReference type="SMR" id="B7H068"/>
<dbReference type="GeneID" id="92892506"/>
<dbReference type="HOGENOM" id="CLU_025113_1_0_6"/>
<dbReference type="Proteomes" id="UP000006924">
    <property type="component" value="Chromosome"/>
</dbReference>
<dbReference type="GO" id="GO:0005737">
    <property type="term" value="C:cytoplasm"/>
    <property type="evidence" value="ECO:0007669"/>
    <property type="project" value="UniProtKB-SubCell"/>
</dbReference>
<dbReference type="GO" id="GO:0005524">
    <property type="term" value="F:ATP binding"/>
    <property type="evidence" value="ECO:0007669"/>
    <property type="project" value="UniProtKB-UniRule"/>
</dbReference>
<dbReference type="GO" id="GO:0004821">
    <property type="term" value="F:histidine-tRNA ligase activity"/>
    <property type="evidence" value="ECO:0007669"/>
    <property type="project" value="UniProtKB-UniRule"/>
</dbReference>
<dbReference type="GO" id="GO:0006427">
    <property type="term" value="P:histidyl-tRNA aminoacylation"/>
    <property type="evidence" value="ECO:0007669"/>
    <property type="project" value="UniProtKB-UniRule"/>
</dbReference>
<dbReference type="CDD" id="cd00773">
    <property type="entry name" value="HisRS-like_core"/>
    <property type="match status" value="1"/>
</dbReference>
<dbReference type="FunFam" id="3.30.930.10:FF:000005">
    <property type="entry name" value="Histidine--tRNA ligase"/>
    <property type="match status" value="1"/>
</dbReference>
<dbReference type="Gene3D" id="3.40.50.800">
    <property type="entry name" value="Anticodon-binding domain"/>
    <property type="match status" value="1"/>
</dbReference>
<dbReference type="Gene3D" id="3.30.930.10">
    <property type="entry name" value="Bira Bifunctional Protein, Domain 2"/>
    <property type="match status" value="1"/>
</dbReference>
<dbReference type="HAMAP" id="MF_00127">
    <property type="entry name" value="His_tRNA_synth"/>
    <property type="match status" value="1"/>
</dbReference>
<dbReference type="InterPro" id="IPR006195">
    <property type="entry name" value="aa-tRNA-synth_II"/>
</dbReference>
<dbReference type="InterPro" id="IPR045864">
    <property type="entry name" value="aa-tRNA-synth_II/BPL/LPL"/>
</dbReference>
<dbReference type="InterPro" id="IPR004154">
    <property type="entry name" value="Anticodon-bd"/>
</dbReference>
<dbReference type="InterPro" id="IPR036621">
    <property type="entry name" value="Anticodon-bd_dom_sf"/>
</dbReference>
<dbReference type="InterPro" id="IPR015807">
    <property type="entry name" value="His-tRNA-ligase"/>
</dbReference>
<dbReference type="InterPro" id="IPR041715">
    <property type="entry name" value="HisRS-like_core"/>
</dbReference>
<dbReference type="InterPro" id="IPR004516">
    <property type="entry name" value="HisRS/HisZ"/>
</dbReference>
<dbReference type="NCBIfam" id="TIGR00442">
    <property type="entry name" value="hisS"/>
    <property type="match status" value="1"/>
</dbReference>
<dbReference type="PANTHER" id="PTHR43707:SF1">
    <property type="entry name" value="HISTIDINE--TRNA LIGASE, MITOCHONDRIAL-RELATED"/>
    <property type="match status" value="1"/>
</dbReference>
<dbReference type="PANTHER" id="PTHR43707">
    <property type="entry name" value="HISTIDYL-TRNA SYNTHETASE"/>
    <property type="match status" value="1"/>
</dbReference>
<dbReference type="Pfam" id="PF03129">
    <property type="entry name" value="HGTP_anticodon"/>
    <property type="match status" value="1"/>
</dbReference>
<dbReference type="Pfam" id="PF13393">
    <property type="entry name" value="tRNA-synt_His"/>
    <property type="match status" value="1"/>
</dbReference>
<dbReference type="PIRSF" id="PIRSF001549">
    <property type="entry name" value="His-tRNA_synth"/>
    <property type="match status" value="1"/>
</dbReference>
<dbReference type="SUPFAM" id="SSF52954">
    <property type="entry name" value="Class II aaRS ABD-related"/>
    <property type="match status" value="1"/>
</dbReference>
<dbReference type="SUPFAM" id="SSF55681">
    <property type="entry name" value="Class II aaRS and biotin synthetases"/>
    <property type="match status" value="1"/>
</dbReference>
<dbReference type="PROSITE" id="PS50862">
    <property type="entry name" value="AA_TRNA_LIGASE_II"/>
    <property type="match status" value="1"/>
</dbReference>
<organism>
    <name type="scientific">Acinetobacter baumannii (strain AB307-0294)</name>
    <dbReference type="NCBI Taxonomy" id="557600"/>
    <lineage>
        <taxon>Bacteria</taxon>
        <taxon>Pseudomonadati</taxon>
        <taxon>Pseudomonadota</taxon>
        <taxon>Gammaproteobacteria</taxon>
        <taxon>Moraxellales</taxon>
        <taxon>Moraxellaceae</taxon>
        <taxon>Acinetobacter</taxon>
        <taxon>Acinetobacter calcoaceticus/baumannii complex</taxon>
    </lineage>
</organism>
<accession>B7H068</accession>
<feature type="chain" id="PRO_1000199107" description="Histidine--tRNA ligase">
    <location>
        <begin position="1"/>
        <end position="430"/>
    </location>
</feature>
<proteinExistence type="inferred from homology"/>